<proteinExistence type="evidence at transcript level"/>
<evidence type="ECO:0000255" key="1"/>
<evidence type="ECO:0000255" key="2">
    <source>
        <dbReference type="PROSITE-ProRule" id="PRU00521"/>
    </source>
</evidence>
<evidence type="ECO:0000305" key="3"/>
<reference key="1">
    <citation type="journal article" date="1991" name="Cell">
        <title>A novel multigene family may encode odorant receptors: a molecular basis for odor recognition.</title>
        <authorList>
            <person name="Buck L."/>
            <person name="Axel R."/>
        </authorList>
    </citation>
    <scope>NUCLEOTIDE SEQUENCE [MRNA]</scope>
</reference>
<dbReference type="EMBL" id="M64385">
    <property type="protein sequence ID" value="AAA41748.1"/>
    <property type="molecule type" value="mRNA"/>
</dbReference>
<dbReference type="PIR" id="E23701">
    <property type="entry name" value="E23701"/>
</dbReference>
<dbReference type="SMR" id="P23269"/>
<dbReference type="STRING" id="10116.ENSRNOP00000066941"/>
<dbReference type="GlyCosmos" id="P23269">
    <property type="glycosylation" value="1 site, No reported glycans"/>
</dbReference>
<dbReference type="GlyGen" id="P23269">
    <property type="glycosylation" value="1 site"/>
</dbReference>
<dbReference type="PaxDb" id="10116-ENSRNOP00000043978"/>
<dbReference type="AGR" id="RGD:1332757"/>
<dbReference type="RGD" id="1332757">
    <property type="gene designation" value="Olr1496"/>
</dbReference>
<dbReference type="InParanoid" id="P23269"/>
<dbReference type="OrthoDB" id="9975554at2759"/>
<dbReference type="PhylomeDB" id="P23269"/>
<dbReference type="PRO" id="PR:P23269"/>
<dbReference type="Proteomes" id="UP000002494">
    <property type="component" value="Unplaced"/>
</dbReference>
<dbReference type="GO" id="GO:0005886">
    <property type="term" value="C:plasma membrane"/>
    <property type="evidence" value="ECO:0000318"/>
    <property type="project" value="GO_Central"/>
</dbReference>
<dbReference type="GO" id="GO:0004930">
    <property type="term" value="F:G protein-coupled receptor activity"/>
    <property type="evidence" value="ECO:0007669"/>
    <property type="project" value="UniProtKB-KW"/>
</dbReference>
<dbReference type="GO" id="GO:0004984">
    <property type="term" value="F:olfactory receptor activity"/>
    <property type="evidence" value="ECO:0000318"/>
    <property type="project" value="GO_Central"/>
</dbReference>
<dbReference type="GO" id="GO:0007165">
    <property type="term" value="P:signal transduction"/>
    <property type="evidence" value="ECO:0000318"/>
    <property type="project" value="GO_Central"/>
</dbReference>
<dbReference type="CDD" id="cd15918">
    <property type="entry name" value="7tmA_OR1_7-like"/>
    <property type="match status" value="1"/>
</dbReference>
<dbReference type="FunFam" id="1.10.1220.70:FF:000001">
    <property type="entry name" value="Olfactory receptor"/>
    <property type="match status" value="1"/>
</dbReference>
<dbReference type="FunFam" id="1.20.1070.10:FF:000009">
    <property type="entry name" value="Olfactory receptor"/>
    <property type="match status" value="1"/>
</dbReference>
<dbReference type="Gene3D" id="1.20.1070.10">
    <property type="entry name" value="Rhodopsin 7-helix transmembrane proteins"/>
    <property type="match status" value="1"/>
</dbReference>
<dbReference type="InterPro" id="IPR000276">
    <property type="entry name" value="GPCR_Rhodpsn"/>
</dbReference>
<dbReference type="InterPro" id="IPR017452">
    <property type="entry name" value="GPCR_Rhodpsn_7TM"/>
</dbReference>
<dbReference type="InterPro" id="IPR000725">
    <property type="entry name" value="Olfact_rcpt"/>
</dbReference>
<dbReference type="PANTHER" id="PTHR48001">
    <property type="entry name" value="OLFACTORY RECEPTOR"/>
    <property type="match status" value="1"/>
</dbReference>
<dbReference type="Pfam" id="PF13853">
    <property type="entry name" value="7tm_4"/>
    <property type="match status" value="1"/>
</dbReference>
<dbReference type="PRINTS" id="PR00237">
    <property type="entry name" value="GPCRRHODOPSN"/>
</dbReference>
<dbReference type="PRINTS" id="PR00245">
    <property type="entry name" value="OLFACTORYR"/>
</dbReference>
<dbReference type="SUPFAM" id="SSF81321">
    <property type="entry name" value="Family A G protein-coupled receptor-like"/>
    <property type="match status" value="1"/>
</dbReference>
<dbReference type="PROSITE" id="PS00237">
    <property type="entry name" value="G_PROTEIN_RECEP_F1_1"/>
    <property type="match status" value="1"/>
</dbReference>
<dbReference type="PROSITE" id="PS50262">
    <property type="entry name" value="G_PROTEIN_RECEP_F1_2"/>
    <property type="match status" value="1"/>
</dbReference>
<gene>
    <name type="primary">Olr1496</name>
</gene>
<name>O1496_RAT</name>
<sequence length="310" mass="35247">MNNQTFITQFLLLGLPIPEEHQHLFYALFLVMYLTTILGNLLIIVLVQLDSQLHTPMYLFLSNLSFSDLCFSSVTMPKLLQNMRSQDTSIPYGGCLAQTYFFMVFGDMESFLLVAMAYDRYVAICFPLHYTSIMSPKLCTCLVLLLWMLTTSHAMMHTLLAARLSFCENNVVLNFFCDLFVLLKLACSDTYINELMIFIMSTLLIIIPFFLIVMSYARIISSILKVPSTQGICKVFSTCGSHLSVVSLFYGTIIGLYLCPAGNNSTVKEMVMAMMYTVVTPMLNPFIYSLRNRDMKRALIRVICSMKITL</sequence>
<feature type="chain" id="PRO_0000150875" description="Olfactory receptor 1496">
    <location>
        <begin position="1"/>
        <end position="310"/>
    </location>
</feature>
<feature type="topological domain" description="Extracellular" evidence="1">
    <location>
        <begin position="1"/>
        <end position="23"/>
    </location>
</feature>
<feature type="transmembrane region" description="Helical; Name=1" evidence="1">
    <location>
        <begin position="24"/>
        <end position="48"/>
    </location>
</feature>
<feature type="topological domain" description="Cytoplasmic" evidence="1">
    <location>
        <begin position="49"/>
        <end position="55"/>
    </location>
</feature>
<feature type="transmembrane region" description="Helical; Name=2" evidence="1">
    <location>
        <begin position="56"/>
        <end position="77"/>
    </location>
</feature>
<feature type="topological domain" description="Extracellular" evidence="1">
    <location>
        <begin position="78"/>
        <end position="98"/>
    </location>
</feature>
<feature type="transmembrane region" description="Helical; Name=3" evidence="1">
    <location>
        <begin position="99"/>
        <end position="118"/>
    </location>
</feature>
<feature type="topological domain" description="Cytoplasmic" evidence="1">
    <location>
        <begin position="119"/>
        <end position="137"/>
    </location>
</feature>
<feature type="transmembrane region" description="Helical; Name=4" evidence="1">
    <location>
        <begin position="138"/>
        <end position="156"/>
    </location>
</feature>
<feature type="topological domain" description="Extracellular" evidence="1">
    <location>
        <begin position="157"/>
        <end position="194"/>
    </location>
</feature>
<feature type="transmembrane region" description="Helical; Name=5" evidence="1">
    <location>
        <begin position="195"/>
        <end position="217"/>
    </location>
</feature>
<feature type="topological domain" description="Cytoplasmic" evidence="1">
    <location>
        <begin position="218"/>
        <end position="234"/>
    </location>
</feature>
<feature type="transmembrane region" description="Helical; Name=6" evidence="1">
    <location>
        <begin position="235"/>
        <end position="258"/>
    </location>
</feature>
<feature type="topological domain" description="Extracellular" evidence="1">
    <location>
        <begin position="259"/>
        <end position="270"/>
    </location>
</feature>
<feature type="transmembrane region" description="Helical; Name=7" evidence="1">
    <location>
        <begin position="271"/>
        <end position="290"/>
    </location>
</feature>
<feature type="topological domain" description="Cytoplasmic" evidence="1">
    <location>
        <begin position="291"/>
        <end position="310"/>
    </location>
</feature>
<feature type="glycosylation site" description="N-linked (GlcNAc...) asparagine" evidence="1">
    <location>
        <position position="3"/>
    </location>
</feature>
<feature type="disulfide bond" evidence="2">
    <location>
        <begin position="95"/>
        <end position="187"/>
    </location>
</feature>
<protein>
    <recommendedName>
        <fullName>Olfactory receptor 1496</fullName>
    </recommendedName>
    <alternativeName>
        <fullName>Olfactory receptor-like protein I3</fullName>
    </alternativeName>
</protein>
<keyword id="KW-1003">Cell membrane</keyword>
<keyword id="KW-1015">Disulfide bond</keyword>
<keyword id="KW-0297">G-protein coupled receptor</keyword>
<keyword id="KW-0325">Glycoprotein</keyword>
<keyword id="KW-0472">Membrane</keyword>
<keyword id="KW-0552">Olfaction</keyword>
<keyword id="KW-0675">Receptor</keyword>
<keyword id="KW-1185">Reference proteome</keyword>
<keyword id="KW-0716">Sensory transduction</keyword>
<keyword id="KW-0807">Transducer</keyword>
<keyword id="KW-0812">Transmembrane</keyword>
<keyword id="KW-1133">Transmembrane helix</keyword>
<organism>
    <name type="scientific">Rattus norvegicus</name>
    <name type="common">Rat</name>
    <dbReference type="NCBI Taxonomy" id="10116"/>
    <lineage>
        <taxon>Eukaryota</taxon>
        <taxon>Metazoa</taxon>
        <taxon>Chordata</taxon>
        <taxon>Craniata</taxon>
        <taxon>Vertebrata</taxon>
        <taxon>Euteleostomi</taxon>
        <taxon>Mammalia</taxon>
        <taxon>Eutheria</taxon>
        <taxon>Euarchontoglires</taxon>
        <taxon>Glires</taxon>
        <taxon>Rodentia</taxon>
        <taxon>Myomorpha</taxon>
        <taxon>Muroidea</taxon>
        <taxon>Muridae</taxon>
        <taxon>Murinae</taxon>
        <taxon>Rattus</taxon>
    </lineage>
</organism>
<comment type="function">
    <text evidence="3">Odorant receptor.</text>
</comment>
<comment type="subcellular location">
    <subcellularLocation>
        <location>Cell membrane</location>
        <topology>Multi-pass membrane protein</topology>
    </subcellularLocation>
</comment>
<comment type="tissue specificity">
    <text>Olfactory epithelium.</text>
</comment>
<comment type="similarity">
    <text evidence="2">Belongs to the G-protein coupled receptor 1 family.</text>
</comment>
<accession>P23269</accession>